<sequence>MKTQIYKGSSKILYSAEEDFLLIMAFSDNGILESGEIIEVSGKGVLNNNISSFLMDKLEMIGIENHFIEKINMREQLIQYVEVFPVQVIISSVACGRFVKEFGMDEGYVFDKPIIDFKVRSREFKYPIVNEYQILNFSWLTLDEIKAVKEQALRIYAFLSGLFMGVGIRLVECKLEFGRVLNGEESIIMLTDEISPDNCRLWHIHSNEKLGFELLENKPNKAFESYQLIADRLKEK</sequence>
<dbReference type="EC" id="6.3.2.6" evidence="1"/>
<dbReference type="EMBL" id="CP000847">
    <property type="protein sequence ID" value="ABV74637.1"/>
    <property type="molecule type" value="Genomic_DNA"/>
</dbReference>
<dbReference type="RefSeq" id="WP_012149271.1">
    <property type="nucleotide sequence ID" value="NC_009881.1"/>
</dbReference>
<dbReference type="SMR" id="A8GML2"/>
<dbReference type="STRING" id="293614.A1C_01630"/>
<dbReference type="KEGG" id="rak:A1C_01630"/>
<dbReference type="eggNOG" id="COG0152">
    <property type="taxonomic scope" value="Bacteria"/>
</dbReference>
<dbReference type="HOGENOM" id="CLU_061495_2_0_5"/>
<dbReference type="UniPathway" id="UPA00074">
    <property type="reaction ID" value="UER00131"/>
</dbReference>
<dbReference type="Proteomes" id="UP000006830">
    <property type="component" value="Chromosome"/>
</dbReference>
<dbReference type="GO" id="GO:0005829">
    <property type="term" value="C:cytosol"/>
    <property type="evidence" value="ECO:0007669"/>
    <property type="project" value="TreeGrafter"/>
</dbReference>
<dbReference type="GO" id="GO:0005524">
    <property type="term" value="F:ATP binding"/>
    <property type="evidence" value="ECO:0007669"/>
    <property type="project" value="UniProtKB-KW"/>
</dbReference>
<dbReference type="GO" id="GO:0004639">
    <property type="term" value="F:phosphoribosylaminoimidazolesuccinocarboxamide synthase activity"/>
    <property type="evidence" value="ECO:0007669"/>
    <property type="project" value="UniProtKB-UniRule"/>
</dbReference>
<dbReference type="GO" id="GO:0006189">
    <property type="term" value="P:'de novo' IMP biosynthetic process"/>
    <property type="evidence" value="ECO:0007669"/>
    <property type="project" value="UniProtKB-UniRule"/>
</dbReference>
<dbReference type="GO" id="GO:0009236">
    <property type="term" value="P:cobalamin biosynthetic process"/>
    <property type="evidence" value="ECO:0007669"/>
    <property type="project" value="InterPro"/>
</dbReference>
<dbReference type="CDD" id="cd01415">
    <property type="entry name" value="SAICAR_synt_PurC"/>
    <property type="match status" value="1"/>
</dbReference>
<dbReference type="Gene3D" id="3.30.470.20">
    <property type="entry name" value="ATP-grasp fold, B domain"/>
    <property type="match status" value="1"/>
</dbReference>
<dbReference type="Gene3D" id="3.30.200.20">
    <property type="entry name" value="Phosphorylase Kinase, domain 1"/>
    <property type="match status" value="1"/>
</dbReference>
<dbReference type="HAMAP" id="MF_00137">
    <property type="entry name" value="SAICAR_synth"/>
    <property type="match status" value="1"/>
</dbReference>
<dbReference type="InterPro" id="IPR028923">
    <property type="entry name" value="SAICAR_synt/ADE2_N"/>
</dbReference>
<dbReference type="InterPro" id="IPR033934">
    <property type="entry name" value="SAICAR_synt_PurC"/>
</dbReference>
<dbReference type="InterPro" id="IPR050089">
    <property type="entry name" value="SAICAR_synthetase"/>
</dbReference>
<dbReference type="PANTHER" id="PTHR43599">
    <property type="entry name" value="MULTIFUNCTIONAL PROTEIN ADE2"/>
    <property type="match status" value="1"/>
</dbReference>
<dbReference type="PANTHER" id="PTHR43599:SF3">
    <property type="entry name" value="SI:DKEY-6E2.2"/>
    <property type="match status" value="1"/>
</dbReference>
<dbReference type="Pfam" id="PF01259">
    <property type="entry name" value="SAICAR_synt"/>
    <property type="match status" value="1"/>
</dbReference>
<dbReference type="SUPFAM" id="SSF56104">
    <property type="entry name" value="SAICAR synthase-like"/>
    <property type="match status" value="1"/>
</dbReference>
<protein>
    <recommendedName>
        <fullName evidence="1">Phosphoribosylaminoimidazole-succinocarboxamide synthase</fullName>
        <ecNumber evidence="1">6.3.2.6</ecNumber>
    </recommendedName>
    <alternativeName>
        <fullName evidence="1">SAICAR synthetase</fullName>
    </alternativeName>
</protein>
<organism>
    <name type="scientific">Rickettsia akari (strain Hartford)</name>
    <dbReference type="NCBI Taxonomy" id="293614"/>
    <lineage>
        <taxon>Bacteria</taxon>
        <taxon>Pseudomonadati</taxon>
        <taxon>Pseudomonadota</taxon>
        <taxon>Alphaproteobacteria</taxon>
        <taxon>Rickettsiales</taxon>
        <taxon>Rickettsiaceae</taxon>
        <taxon>Rickettsieae</taxon>
        <taxon>Rickettsia</taxon>
        <taxon>spotted fever group</taxon>
    </lineage>
</organism>
<comment type="catalytic activity">
    <reaction evidence="1">
        <text>5-amino-1-(5-phospho-D-ribosyl)imidazole-4-carboxylate + L-aspartate + ATP = (2S)-2-[5-amino-1-(5-phospho-beta-D-ribosyl)imidazole-4-carboxamido]succinate + ADP + phosphate + 2 H(+)</text>
        <dbReference type="Rhea" id="RHEA:22628"/>
        <dbReference type="ChEBI" id="CHEBI:15378"/>
        <dbReference type="ChEBI" id="CHEBI:29991"/>
        <dbReference type="ChEBI" id="CHEBI:30616"/>
        <dbReference type="ChEBI" id="CHEBI:43474"/>
        <dbReference type="ChEBI" id="CHEBI:58443"/>
        <dbReference type="ChEBI" id="CHEBI:77657"/>
        <dbReference type="ChEBI" id="CHEBI:456216"/>
        <dbReference type="EC" id="6.3.2.6"/>
    </reaction>
</comment>
<comment type="pathway">
    <text evidence="1">Purine metabolism; IMP biosynthesis via de novo pathway; 5-amino-1-(5-phospho-D-ribosyl)imidazole-4-carboxamide from 5-amino-1-(5-phospho-D-ribosyl)imidazole-4-carboxylate: step 1/2.</text>
</comment>
<comment type="similarity">
    <text evidence="1">Belongs to the SAICAR synthetase family.</text>
</comment>
<accession>A8GML2</accession>
<feature type="chain" id="PRO_1000018769" description="Phosphoribosylaminoimidazole-succinocarboxamide synthase">
    <location>
        <begin position="1"/>
        <end position="236"/>
    </location>
</feature>
<evidence type="ECO:0000255" key="1">
    <source>
        <dbReference type="HAMAP-Rule" id="MF_00137"/>
    </source>
</evidence>
<gene>
    <name evidence="1" type="primary">purC</name>
    <name type="ordered locus">A1C_01630</name>
</gene>
<name>PUR7_RICAH</name>
<reference key="1">
    <citation type="submission" date="2007-09" db="EMBL/GenBank/DDBJ databases">
        <title>Complete genome sequence of Rickettsia akari.</title>
        <authorList>
            <person name="Madan A."/>
            <person name="Fahey J."/>
            <person name="Helton E."/>
            <person name="Ketteman M."/>
            <person name="Madan A."/>
            <person name="Rodrigues S."/>
            <person name="Sanchez A."/>
            <person name="Whiting M."/>
            <person name="Dasch G."/>
            <person name="Eremeeva M."/>
        </authorList>
    </citation>
    <scope>NUCLEOTIDE SEQUENCE [LARGE SCALE GENOMIC DNA]</scope>
    <source>
        <strain>Hartford</strain>
    </source>
</reference>
<keyword id="KW-0067">ATP-binding</keyword>
<keyword id="KW-0436">Ligase</keyword>
<keyword id="KW-0547">Nucleotide-binding</keyword>
<keyword id="KW-0658">Purine biosynthesis</keyword>
<proteinExistence type="inferred from homology"/>